<proteinExistence type="inferred from homology"/>
<feature type="chain" id="PRO_0000385994" description="GTPase Obg">
    <location>
        <begin position="1"/>
        <end position="440"/>
    </location>
</feature>
<feature type="domain" description="Obg" evidence="3">
    <location>
        <begin position="5"/>
        <end position="163"/>
    </location>
</feature>
<feature type="domain" description="OBG-type G" evidence="1">
    <location>
        <begin position="164"/>
        <end position="338"/>
    </location>
</feature>
<feature type="domain" description="OCT" evidence="2">
    <location>
        <begin position="362"/>
        <end position="440"/>
    </location>
</feature>
<feature type="binding site" evidence="1">
    <location>
        <begin position="170"/>
        <end position="177"/>
    </location>
    <ligand>
        <name>GTP</name>
        <dbReference type="ChEBI" id="CHEBI:37565"/>
    </ligand>
</feature>
<feature type="binding site" evidence="1">
    <location>
        <position position="177"/>
    </location>
    <ligand>
        <name>Mg(2+)</name>
        <dbReference type="ChEBI" id="CHEBI:18420"/>
    </ligand>
</feature>
<feature type="binding site" evidence="1">
    <location>
        <begin position="195"/>
        <end position="199"/>
    </location>
    <ligand>
        <name>GTP</name>
        <dbReference type="ChEBI" id="CHEBI:37565"/>
    </ligand>
</feature>
<feature type="binding site" evidence="1">
    <location>
        <position position="197"/>
    </location>
    <ligand>
        <name>Mg(2+)</name>
        <dbReference type="ChEBI" id="CHEBI:18420"/>
    </ligand>
</feature>
<feature type="binding site" evidence="1">
    <location>
        <begin position="217"/>
        <end position="220"/>
    </location>
    <ligand>
        <name>GTP</name>
        <dbReference type="ChEBI" id="CHEBI:37565"/>
    </ligand>
</feature>
<feature type="binding site" evidence="1">
    <location>
        <begin position="288"/>
        <end position="291"/>
    </location>
    <ligand>
        <name>GTP</name>
        <dbReference type="ChEBI" id="CHEBI:37565"/>
    </ligand>
</feature>
<feature type="binding site" evidence="1">
    <location>
        <begin position="319"/>
        <end position="321"/>
    </location>
    <ligand>
        <name>GTP</name>
        <dbReference type="ChEBI" id="CHEBI:37565"/>
    </ligand>
</feature>
<keyword id="KW-0963">Cytoplasm</keyword>
<keyword id="KW-0342">GTP-binding</keyword>
<keyword id="KW-0378">Hydrolase</keyword>
<keyword id="KW-0460">Magnesium</keyword>
<keyword id="KW-0479">Metal-binding</keyword>
<keyword id="KW-0547">Nucleotide-binding</keyword>
<gene>
    <name evidence="1" type="primary">obg</name>
    <name type="ordered locus">LBUL_0747</name>
</gene>
<protein>
    <recommendedName>
        <fullName evidence="1">GTPase Obg</fullName>
        <ecNumber evidence="1">3.6.5.-</ecNumber>
    </recommendedName>
    <alternativeName>
        <fullName evidence="1">GTP-binding protein Obg</fullName>
    </alternativeName>
</protein>
<organism>
    <name type="scientific">Lactobacillus delbrueckii subsp. bulgaricus (strain ATCC BAA-365 / Lb-18)</name>
    <dbReference type="NCBI Taxonomy" id="321956"/>
    <lineage>
        <taxon>Bacteria</taxon>
        <taxon>Bacillati</taxon>
        <taxon>Bacillota</taxon>
        <taxon>Bacilli</taxon>
        <taxon>Lactobacillales</taxon>
        <taxon>Lactobacillaceae</taxon>
        <taxon>Lactobacillus</taxon>
    </lineage>
</organism>
<name>OBG_LACDB</name>
<comment type="function">
    <text evidence="1">An essential GTPase which binds GTP, GDP and possibly (p)ppGpp with moderate affinity, with high nucleotide exchange rates and a fairly low GTP hydrolysis rate. Plays a role in control of the cell cycle, stress response, ribosome biogenesis and in those bacteria that undergo differentiation, in morphogenesis control.</text>
</comment>
<comment type="cofactor">
    <cofactor evidence="1">
        <name>Mg(2+)</name>
        <dbReference type="ChEBI" id="CHEBI:18420"/>
    </cofactor>
</comment>
<comment type="subunit">
    <text evidence="1">Monomer.</text>
</comment>
<comment type="subcellular location">
    <subcellularLocation>
        <location evidence="1">Cytoplasm</location>
    </subcellularLocation>
</comment>
<comment type="similarity">
    <text evidence="1">Belongs to the TRAFAC class OBG-HflX-like GTPase superfamily. OBG GTPase family.</text>
</comment>
<reference key="1">
    <citation type="journal article" date="2006" name="Proc. Natl. Acad. Sci. U.S.A.">
        <title>Comparative genomics of the lactic acid bacteria.</title>
        <authorList>
            <person name="Makarova K.S."/>
            <person name="Slesarev A."/>
            <person name="Wolf Y.I."/>
            <person name="Sorokin A."/>
            <person name="Mirkin B."/>
            <person name="Koonin E.V."/>
            <person name="Pavlov A."/>
            <person name="Pavlova N."/>
            <person name="Karamychev V."/>
            <person name="Polouchine N."/>
            <person name="Shakhova V."/>
            <person name="Grigoriev I."/>
            <person name="Lou Y."/>
            <person name="Rohksar D."/>
            <person name="Lucas S."/>
            <person name="Huang K."/>
            <person name="Goodstein D.M."/>
            <person name="Hawkins T."/>
            <person name="Plengvidhya V."/>
            <person name="Welker D."/>
            <person name="Hughes J."/>
            <person name="Goh Y."/>
            <person name="Benson A."/>
            <person name="Baldwin K."/>
            <person name="Lee J.-H."/>
            <person name="Diaz-Muniz I."/>
            <person name="Dosti B."/>
            <person name="Smeianov V."/>
            <person name="Wechter W."/>
            <person name="Barabote R."/>
            <person name="Lorca G."/>
            <person name="Altermann E."/>
            <person name="Barrangou R."/>
            <person name="Ganesan B."/>
            <person name="Xie Y."/>
            <person name="Rawsthorne H."/>
            <person name="Tamir D."/>
            <person name="Parker C."/>
            <person name="Breidt F."/>
            <person name="Broadbent J.R."/>
            <person name="Hutkins R."/>
            <person name="O'Sullivan D."/>
            <person name="Steele J."/>
            <person name="Unlu G."/>
            <person name="Saier M.H. Jr."/>
            <person name="Klaenhammer T."/>
            <person name="Richardson P."/>
            <person name="Kozyavkin S."/>
            <person name="Weimer B.C."/>
            <person name="Mills D.A."/>
        </authorList>
    </citation>
    <scope>NUCLEOTIDE SEQUENCE [LARGE SCALE GENOMIC DNA]</scope>
    <source>
        <strain>ATCC BAA-365 / Lb-18</strain>
    </source>
</reference>
<dbReference type="EC" id="3.6.5.-" evidence="1"/>
<dbReference type="EMBL" id="CP000412">
    <property type="protein sequence ID" value="ABJ58361.1"/>
    <property type="molecule type" value="Genomic_DNA"/>
</dbReference>
<dbReference type="RefSeq" id="WP_003614004.1">
    <property type="nucleotide sequence ID" value="NC_008529.1"/>
</dbReference>
<dbReference type="SMR" id="Q04B11"/>
<dbReference type="KEGG" id="lbu:LBUL_0747"/>
<dbReference type="HOGENOM" id="CLU_011747_2_1_9"/>
<dbReference type="BioCyc" id="LDEL321956:LBUL_RS03560-MONOMER"/>
<dbReference type="GO" id="GO:0005737">
    <property type="term" value="C:cytoplasm"/>
    <property type="evidence" value="ECO:0007669"/>
    <property type="project" value="UniProtKB-SubCell"/>
</dbReference>
<dbReference type="GO" id="GO:0005525">
    <property type="term" value="F:GTP binding"/>
    <property type="evidence" value="ECO:0007669"/>
    <property type="project" value="UniProtKB-UniRule"/>
</dbReference>
<dbReference type="GO" id="GO:0003924">
    <property type="term" value="F:GTPase activity"/>
    <property type="evidence" value="ECO:0007669"/>
    <property type="project" value="UniProtKB-UniRule"/>
</dbReference>
<dbReference type="GO" id="GO:0000287">
    <property type="term" value="F:magnesium ion binding"/>
    <property type="evidence" value="ECO:0007669"/>
    <property type="project" value="InterPro"/>
</dbReference>
<dbReference type="GO" id="GO:0042254">
    <property type="term" value="P:ribosome biogenesis"/>
    <property type="evidence" value="ECO:0007669"/>
    <property type="project" value="UniProtKB-UniRule"/>
</dbReference>
<dbReference type="CDD" id="cd01898">
    <property type="entry name" value="Obg"/>
    <property type="match status" value="1"/>
</dbReference>
<dbReference type="FunFam" id="2.70.210.12:FF:000001">
    <property type="entry name" value="GTPase Obg"/>
    <property type="match status" value="1"/>
</dbReference>
<dbReference type="Gene3D" id="3.30.300.350">
    <property type="entry name" value="GTP-binding protein OBG, C-terminal domain"/>
    <property type="match status" value="1"/>
</dbReference>
<dbReference type="Gene3D" id="2.70.210.12">
    <property type="entry name" value="GTP1/OBG domain"/>
    <property type="match status" value="1"/>
</dbReference>
<dbReference type="Gene3D" id="3.40.50.300">
    <property type="entry name" value="P-loop containing nucleotide triphosphate hydrolases"/>
    <property type="match status" value="1"/>
</dbReference>
<dbReference type="HAMAP" id="MF_01454">
    <property type="entry name" value="GTPase_Obg"/>
    <property type="match status" value="1"/>
</dbReference>
<dbReference type="InterPro" id="IPR031167">
    <property type="entry name" value="G_OBG"/>
</dbReference>
<dbReference type="InterPro" id="IPR006073">
    <property type="entry name" value="GTP-bd"/>
</dbReference>
<dbReference type="InterPro" id="IPR014100">
    <property type="entry name" value="GTP-bd_Obg/CgtA"/>
</dbReference>
<dbReference type="InterPro" id="IPR036346">
    <property type="entry name" value="GTP-bd_prot_GTP1/OBG_C_sf"/>
</dbReference>
<dbReference type="InterPro" id="IPR006074">
    <property type="entry name" value="GTP1-OBG_CS"/>
</dbReference>
<dbReference type="InterPro" id="IPR006169">
    <property type="entry name" value="GTP1_OBG_dom"/>
</dbReference>
<dbReference type="InterPro" id="IPR036726">
    <property type="entry name" value="GTP1_OBG_dom_sf"/>
</dbReference>
<dbReference type="InterPro" id="IPR045086">
    <property type="entry name" value="OBG_GTPase"/>
</dbReference>
<dbReference type="InterPro" id="IPR015349">
    <property type="entry name" value="OCT_dom"/>
</dbReference>
<dbReference type="InterPro" id="IPR027417">
    <property type="entry name" value="P-loop_NTPase"/>
</dbReference>
<dbReference type="NCBIfam" id="TIGR02729">
    <property type="entry name" value="Obg_CgtA"/>
    <property type="match status" value="1"/>
</dbReference>
<dbReference type="NCBIfam" id="TIGR03595">
    <property type="entry name" value="Obg_CgtA_exten"/>
    <property type="match status" value="1"/>
</dbReference>
<dbReference type="NCBIfam" id="NF008954">
    <property type="entry name" value="PRK12296.1"/>
    <property type="match status" value="1"/>
</dbReference>
<dbReference type="NCBIfam" id="NF008955">
    <property type="entry name" value="PRK12297.1"/>
    <property type="match status" value="1"/>
</dbReference>
<dbReference type="NCBIfam" id="NF008956">
    <property type="entry name" value="PRK12299.1"/>
    <property type="match status" value="1"/>
</dbReference>
<dbReference type="PANTHER" id="PTHR11702">
    <property type="entry name" value="DEVELOPMENTALLY REGULATED GTP-BINDING PROTEIN-RELATED"/>
    <property type="match status" value="1"/>
</dbReference>
<dbReference type="PANTHER" id="PTHR11702:SF31">
    <property type="entry name" value="MITOCHONDRIAL RIBOSOME-ASSOCIATED GTPASE 2"/>
    <property type="match status" value="1"/>
</dbReference>
<dbReference type="Pfam" id="PF09269">
    <property type="entry name" value="DUF1967"/>
    <property type="match status" value="1"/>
</dbReference>
<dbReference type="Pfam" id="PF01018">
    <property type="entry name" value="GTP1_OBG"/>
    <property type="match status" value="1"/>
</dbReference>
<dbReference type="Pfam" id="PF01926">
    <property type="entry name" value="MMR_HSR1"/>
    <property type="match status" value="1"/>
</dbReference>
<dbReference type="PIRSF" id="PIRSF002401">
    <property type="entry name" value="GTP_bd_Obg/CgtA"/>
    <property type="match status" value="1"/>
</dbReference>
<dbReference type="PRINTS" id="PR00326">
    <property type="entry name" value="GTP1OBG"/>
</dbReference>
<dbReference type="SUPFAM" id="SSF102741">
    <property type="entry name" value="Obg GTP-binding protein C-terminal domain"/>
    <property type="match status" value="1"/>
</dbReference>
<dbReference type="SUPFAM" id="SSF82051">
    <property type="entry name" value="Obg GTP-binding protein N-terminal domain"/>
    <property type="match status" value="1"/>
</dbReference>
<dbReference type="SUPFAM" id="SSF52540">
    <property type="entry name" value="P-loop containing nucleoside triphosphate hydrolases"/>
    <property type="match status" value="1"/>
</dbReference>
<dbReference type="PROSITE" id="PS51710">
    <property type="entry name" value="G_OBG"/>
    <property type="match status" value="1"/>
</dbReference>
<dbReference type="PROSITE" id="PS00905">
    <property type="entry name" value="GTP1_OBG"/>
    <property type="match status" value="1"/>
</dbReference>
<dbReference type="PROSITE" id="PS51883">
    <property type="entry name" value="OBG"/>
    <property type="match status" value="1"/>
</dbReference>
<dbReference type="PROSITE" id="PS51881">
    <property type="entry name" value="OCT"/>
    <property type="match status" value="1"/>
</dbReference>
<evidence type="ECO:0000255" key="1">
    <source>
        <dbReference type="HAMAP-Rule" id="MF_01454"/>
    </source>
</evidence>
<evidence type="ECO:0000255" key="2">
    <source>
        <dbReference type="PROSITE-ProRule" id="PRU01229"/>
    </source>
</evidence>
<evidence type="ECO:0000255" key="3">
    <source>
        <dbReference type="PROSITE-ProRule" id="PRU01231"/>
    </source>
</evidence>
<sequence length="440" mass="48286">MPTPSTFVDQTKIEVQAGKGGDGMVAFRHEKFMPNGGPAGGDGGRGGSIIFVADNGLRTLMDFRYRRKFKAEPGENGRIKAQYGKAAKDLYLKVPVGTTVYDFFTGEEIGDLVENGQELVVAKGGRGGRGNIHFATSVNTAPEIAENGEPGEFRTLRLELKVLADVGLVGFPSVGKSTLLSVVTSAKPKIAAYQFTTLKPNLGMVLLPDGRDFSMADLPGLIKGASQGVGLGIQFLRHVERTKVILHMVSMDPNNGRDAYEDYETILHELASYTEDDLSSKREIIVASQMDIPGADEKLAQFKKDLAAHGVDQEVYELSSVTHQGVDRLMSRAADLVSEVEAQEAEAAVKPKEEVKTKTYKYHRPEKMEFTVEKLADHEFEIHGEQLERLVAMTNLDHQDGIMRLARRLKKMGVDDELRAQGAVDGDDVYIGDFSFEFVQ</sequence>
<accession>Q04B11</accession>